<reference key="1">
    <citation type="submission" date="2007-04" db="EMBL/GenBank/DDBJ databases">
        <title>Complete sequence of Pseudomonas mendocina ymp.</title>
        <authorList>
            <consortium name="US DOE Joint Genome Institute"/>
            <person name="Copeland A."/>
            <person name="Lucas S."/>
            <person name="Lapidus A."/>
            <person name="Barry K."/>
            <person name="Glavina del Rio T."/>
            <person name="Dalin E."/>
            <person name="Tice H."/>
            <person name="Pitluck S."/>
            <person name="Kiss H."/>
            <person name="Brettin T."/>
            <person name="Detter J.C."/>
            <person name="Bruce D."/>
            <person name="Han C."/>
            <person name="Schmutz J."/>
            <person name="Larimer F."/>
            <person name="Land M."/>
            <person name="Hauser L."/>
            <person name="Kyrpides N."/>
            <person name="Mikhailova N."/>
            <person name="Hersman L."/>
            <person name="Dubois J."/>
            <person name="Maurice P."/>
            <person name="Richardson P."/>
        </authorList>
    </citation>
    <scope>NUCLEOTIDE SEQUENCE [LARGE SCALE GENOMIC DNA]</scope>
    <source>
        <strain>ymp</strain>
    </source>
</reference>
<feature type="chain" id="PRO_1000070142" description="Membrane protein insertase YidC">
    <location>
        <begin position="1"/>
        <end position="581"/>
    </location>
</feature>
<feature type="transmembrane region" description="Helical" evidence="1">
    <location>
        <begin position="7"/>
        <end position="27"/>
    </location>
</feature>
<feature type="transmembrane region" description="Helical" evidence="1">
    <location>
        <begin position="365"/>
        <end position="385"/>
    </location>
</feature>
<feature type="transmembrane region" description="Helical" evidence="1">
    <location>
        <begin position="388"/>
        <end position="408"/>
    </location>
</feature>
<feature type="transmembrane region" description="Helical" evidence="1">
    <location>
        <begin position="458"/>
        <end position="478"/>
    </location>
</feature>
<feature type="transmembrane region" description="Helical" evidence="1">
    <location>
        <begin position="489"/>
        <end position="509"/>
    </location>
</feature>
<feature type="transmembrane region" description="Helical" evidence="1">
    <location>
        <begin position="536"/>
        <end position="556"/>
    </location>
</feature>
<feature type="region of interest" description="Disordered" evidence="2">
    <location>
        <begin position="41"/>
        <end position="62"/>
    </location>
</feature>
<accession>A4Y1A0</accession>
<evidence type="ECO:0000255" key="1">
    <source>
        <dbReference type="HAMAP-Rule" id="MF_01810"/>
    </source>
</evidence>
<evidence type="ECO:0000256" key="2">
    <source>
        <dbReference type="SAM" id="MobiDB-lite"/>
    </source>
</evidence>
<dbReference type="EMBL" id="CP000680">
    <property type="protein sequence ID" value="ABP87366.1"/>
    <property type="molecule type" value="Genomic_DNA"/>
</dbReference>
<dbReference type="SMR" id="A4Y1A0"/>
<dbReference type="STRING" id="399739.Pmen_4620"/>
<dbReference type="KEGG" id="pmy:Pmen_4620"/>
<dbReference type="PATRIC" id="fig|399739.8.peg.4685"/>
<dbReference type="eggNOG" id="COG0706">
    <property type="taxonomic scope" value="Bacteria"/>
</dbReference>
<dbReference type="HOGENOM" id="CLU_016535_3_0_6"/>
<dbReference type="OrthoDB" id="9780552at2"/>
<dbReference type="GO" id="GO:0005886">
    <property type="term" value="C:plasma membrane"/>
    <property type="evidence" value="ECO:0007669"/>
    <property type="project" value="UniProtKB-SubCell"/>
</dbReference>
<dbReference type="GO" id="GO:0032977">
    <property type="term" value="F:membrane insertase activity"/>
    <property type="evidence" value="ECO:0007669"/>
    <property type="project" value="InterPro"/>
</dbReference>
<dbReference type="GO" id="GO:0051205">
    <property type="term" value="P:protein insertion into membrane"/>
    <property type="evidence" value="ECO:0007669"/>
    <property type="project" value="TreeGrafter"/>
</dbReference>
<dbReference type="GO" id="GO:0015031">
    <property type="term" value="P:protein transport"/>
    <property type="evidence" value="ECO:0007669"/>
    <property type="project" value="UniProtKB-KW"/>
</dbReference>
<dbReference type="CDD" id="cd20070">
    <property type="entry name" value="5TM_YidC_Alb3"/>
    <property type="match status" value="1"/>
</dbReference>
<dbReference type="CDD" id="cd19961">
    <property type="entry name" value="EcYidC-like_peri"/>
    <property type="match status" value="1"/>
</dbReference>
<dbReference type="Gene3D" id="2.70.98.90">
    <property type="match status" value="1"/>
</dbReference>
<dbReference type="HAMAP" id="MF_01810">
    <property type="entry name" value="YidC_type1"/>
    <property type="match status" value="1"/>
</dbReference>
<dbReference type="InterPro" id="IPR019998">
    <property type="entry name" value="Membr_insert_YidC"/>
</dbReference>
<dbReference type="InterPro" id="IPR028053">
    <property type="entry name" value="Membr_insert_YidC_N"/>
</dbReference>
<dbReference type="InterPro" id="IPR001708">
    <property type="entry name" value="YidC/ALB3/OXA1/COX18"/>
</dbReference>
<dbReference type="InterPro" id="IPR028055">
    <property type="entry name" value="YidC/Oxa/ALB_C"/>
</dbReference>
<dbReference type="InterPro" id="IPR047196">
    <property type="entry name" value="YidC_ALB_C"/>
</dbReference>
<dbReference type="InterPro" id="IPR038221">
    <property type="entry name" value="YidC_periplasmic_sf"/>
</dbReference>
<dbReference type="NCBIfam" id="NF002352">
    <property type="entry name" value="PRK01318.1-3"/>
    <property type="match status" value="1"/>
</dbReference>
<dbReference type="NCBIfam" id="TIGR03593">
    <property type="entry name" value="yidC_nterm"/>
    <property type="match status" value="2"/>
</dbReference>
<dbReference type="NCBIfam" id="TIGR03592">
    <property type="entry name" value="yidC_oxa1_cterm"/>
    <property type="match status" value="1"/>
</dbReference>
<dbReference type="PANTHER" id="PTHR12428:SF65">
    <property type="entry name" value="CYTOCHROME C OXIDASE ASSEMBLY PROTEIN COX18, MITOCHONDRIAL"/>
    <property type="match status" value="1"/>
</dbReference>
<dbReference type="PANTHER" id="PTHR12428">
    <property type="entry name" value="OXA1"/>
    <property type="match status" value="1"/>
</dbReference>
<dbReference type="Pfam" id="PF02096">
    <property type="entry name" value="60KD_IMP"/>
    <property type="match status" value="1"/>
</dbReference>
<dbReference type="Pfam" id="PF14849">
    <property type="entry name" value="YidC_periplas"/>
    <property type="match status" value="2"/>
</dbReference>
<dbReference type="PRINTS" id="PR00701">
    <property type="entry name" value="60KDINNERMP"/>
</dbReference>
<dbReference type="PRINTS" id="PR01900">
    <property type="entry name" value="YIDCPROTEIN"/>
</dbReference>
<protein>
    <recommendedName>
        <fullName evidence="1">Membrane protein insertase YidC</fullName>
    </recommendedName>
    <alternativeName>
        <fullName evidence="1">Foldase YidC</fullName>
    </alternativeName>
    <alternativeName>
        <fullName evidence="1">Membrane integrase YidC</fullName>
    </alternativeName>
    <alternativeName>
        <fullName evidence="1">Membrane protein YidC</fullName>
    </alternativeName>
</protein>
<gene>
    <name evidence="1" type="primary">yidC</name>
    <name type="ordered locus">Pmen_4620</name>
</gene>
<proteinExistence type="inferred from homology"/>
<sequence>MDIQRSILIVALAVVSYLMVLQWNEDYGQAALPAEVSSSTAATPALPDTPADTASTGGDDIPTAVAEPTAAAVAPTAAASDELIRVKTDVLDLAIDPRGGDIVQLRLPQYPRRQDRPDVPFQLFDNGSERTYLAQSGLIGQNAPDKSSGRALWSSEKQSYEMADGQDSLVVDLTYSENGVSYIKRYSFKRGLNPQCSAREQQLKKPGCVDPSAYQVDVRYLIDNQSDQAWSGNLFAQLKRDNSGDPSSTTATGTATYLGAALWTSDEPYKKVSMKDIDKQSFKETVQGGWVAWLQHYFVTAWVPSKDSTNLVQTRKDSQGNYIVGFTGPAVQVAAGAQGETGAILYAGPKLQEHLGKLSPGLELTVDYGFLWFLAQPIFWLLEVIHGLLGNWGWSIIVLTIIIKLIFFPLSAASYRSMARMRAVSPKLQALKEQHGDDRQKMSQAMMELYKKEKINPLGGCLPILVQMPVFLALYWVLLESVEMRQAPWMFWITDLSIKDPFFILPIIMGATMFIQQQLNPTPPDPMQARVLKLMPIIFTFFFLWFPAGLVLYWVVNNILSIGQQWYITRKIEAAAKPANA</sequence>
<name>YIDC_ECTM1</name>
<comment type="function">
    <text evidence="1">Required for the insertion and/or proper folding and/or complex formation of integral membrane proteins into the membrane. Involved in integration of membrane proteins that insert both dependently and independently of the Sec translocase complex, as well as at least some lipoproteins. Aids folding of multispanning membrane proteins.</text>
</comment>
<comment type="subunit">
    <text evidence="1">Interacts with the Sec translocase complex via SecD. Specifically interacts with transmembrane segments of nascent integral membrane proteins during membrane integration.</text>
</comment>
<comment type="subcellular location">
    <subcellularLocation>
        <location evidence="1">Cell inner membrane</location>
        <topology evidence="1">Multi-pass membrane protein</topology>
    </subcellularLocation>
</comment>
<comment type="similarity">
    <text evidence="1">Belongs to the OXA1/ALB3/YidC family. Type 1 subfamily.</text>
</comment>
<keyword id="KW-0997">Cell inner membrane</keyword>
<keyword id="KW-1003">Cell membrane</keyword>
<keyword id="KW-0143">Chaperone</keyword>
<keyword id="KW-0472">Membrane</keyword>
<keyword id="KW-0653">Protein transport</keyword>
<keyword id="KW-0812">Transmembrane</keyword>
<keyword id="KW-1133">Transmembrane helix</keyword>
<keyword id="KW-0813">Transport</keyword>
<organism>
    <name type="scientific">Ectopseudomonas mendocina (strain ymp)</name>
    <name type="common">Pseudomonas mendocina</name>
    <dbReference type="NCBI Taxonomy" id="399739"/>
    <lineage>
        <taxon>Bacteria</taxon>
        <taxon>Pseudomonadati</taxon>
        <taxon>Pseudomonadota</taxon>
        <taxon>Gammaproteobacteria</taxon>
        <taxon>Pseudomonadales</taxon>
        <taxon>Pseudomonadaceae</taxon>
        <taxon>Ectopseudomonas</taxon>
    </lineage>
</organism>